<proteinExistence type="inferred from homology"/>
<reference key="1">
    <citation type="journal article" date="2009" name="Genome Biol.">
        <title>Genomic and genetic analyses of diversity and plant interactions of Pseudomonas fluorescens.</title>
        <authorList>
            <person name="Silby M.W."/>
            <person name="Cerdeno-Tarraga A.M."/>
            <person name="Vernikos G.S."/>
            <person name="Giddens S.R."/>
            <person name="Jackson R.W."/>
            <person name="Preston G.M."/>
            <person name="Zhang X.-X."/>
            <person name="Moon C.D."/>
            <person name="Gehrig S.M."/>
            <person name="Godfrey S.A.C."/>
            <person name="Knight C.G."/>
            <person name="Malone J.G."/>
            <person name="Robinson Z."/>
            <person name="Spiers A.J."/>
            <person name="Harris S."/>
            <person name="Challis G.L."/>
            <person name="Yaxley A.M."/>
            <person name="Harris D."/>
            <person name="Seeger K."/>
            <person name="Murphy L."/>
            <person name="Rutter S."/>
            <person name="Squares R."/>
            <person name="Quail M.A."/>
            <person name="Saunders E."/>
            <person name="Mavromatis K."/>
            <person name="Brettin T.S."/>
            <person name="Bentley S.D."/>
            <person name="Hothersall J."/>
            <person name="Stephens E."/>
            <person name="Thomas C.M."/>
            <person name="Parkhill J."/>
            <person name="Levy S.B."/>
            <person name="Rainey P.B."/>
            <person name="Thomson N.R."/>
        </authorList>
    </citation>
    <scope>NUCLEOTIDE SEQUENCE [LARGE SCALE GENOMIC DNA]</scope>
    <source>
        <strain>Pf0-1</strain>
    </source>
</reference>
<keyword id="KW-0238">DNA-binding</keyword>
<keyword id="KW-0678">Repressor</keyword>
<keyword id="KW-0804">Transcription</keyword>
<keyword id="KW-0805">Transcription regulation</keyword>
<evidence type="ECO:0000250" key="1"/>
<evidence type="ECO:0000255" key="2">
    <source>
        <dbReference type="HAMAP-Rule" id="MF_00768"/>
    </source>
</evidence>
<protein>
    <recommendedName>
        <fullName evidence="2">HTH-type transcriptional regulator BetI</fullName>
    </recommendedName>
</protein>
<feature type="chain" id="PRO_0000257739" description="HTH-type transcriptional regulator BetI">
    <location>
        <begin position="1"/>
        <end position="197"/>
    </location>
</feature>
<feature type="domain" description="HTH tetR-type" evidence="2">
    <location>
        <begin position="8"/>
        <end position="68"/>
    </location>
</feature>
<feature type="DNA-binding region" description="H-T-H motif" evidence="2">
    <location>
        <begin position="31"/>
        <end position="50"/>
    </location>
</feature>
<sequence>MPKVGMQPIRRQQLIEATLQAVDQVGMGDASIALIARLAGVSNGIISHYFQDKNGLIAATMRYLMSVLSENVTARRQALADSSPRAHLQVIIEGNFDASQVNGPAMKTWLAFWATSMHQPSLHRLQRINDHRLYSNLCCEFRRVLPLEDARTAARGLAALIDGLWLRGALSGDAFDTAQAQQIAYEYMDFQLAKQVS</sequence>
<gene>
    <name evidence="2" type="primary">betI</name>
    <name type="ordered locus">Pfl01_5242</name>
</gene>
<accession>Q3K5H5</accession>
<comment type="function">
    <text evidence="1">Repressor involved in the biosynthesis of the osmoprotectant glycine betaine. It represses transcription of the choline transporter BetT and the genes of BetAB involved in the synthesis of glycine betaine (By similarity).</text>
</comment>
<comment type="pathway">
    <text>Amine and polyamine biosynthesis; betaine biosynthesis via choline pathway [regulation].</text>
</comment>
<dbReference type="EMBL" id="CP000094">
    <property type="protein sequence ID" value="ABA76979.1"/>
    <property type="molecule type" value="Genomic_DNA"/>
</dbReference>
<dbReference type="RefSeq" id="WP_011336305.1">
    <property type="nucleotide sequence ID" value="NC_007492.2"/>
</dbReference>
<dbReference type="SMR" id="Q3K5H5"/>
<dbReference type="KEGG" id="pfo:Pfl01_5242"/>
<dbReference type="eggNOG" id="COG1309">
    <property type="taxonomic scope" value="Bacteria"/>
</dbReference>
<dbReference type="HOGENOM" id="CLU_069356_15_4_6"/>
<dbReference type="UniPathway" id="UPA00529"/>
<dbReference type="Proteomes" id="UP000002704">
    <property type="component" value="Chromosome"/>
</dbReference>
<dbReference type="GO" id="GO:0003700">
    <property type="term" value="F:DNA-binding transcription factor activity"/>
    <property type="evidence" value="ECO:0007669"/>
    <property type="project" value="UniProtKB-UniRule"/>
</dbReference>
<dbReference type="GO" id="GO:0000976">
    <property type="term" value="F:transcription cis-regulatory region binding"/>
    <property type="evidence" value="ECO:0007669"/>
    <property type="project" value="TreeGrafter"/>
</dbReference>
<dbReference type="GO" id="GO:0019285">
    <property type="term" value="P:glycine betaine biosynthetic process from choline"/>
    <property type="evidence" value="ECO:0007669"/>
    <property type="project" value="UniProtKB-UniRule"/>
</dbReference>
<dbReference type="GO" id="GO:0045892">
    <property type="term" value="P:negative regulation of DNA-templated transcription"/>
    <property type="evidence" value="ECO:0007669"/>
    <property type="project" value="UniProtKB-UniRule"/>
</dbReference>
<dbReference type="Gene3D" id="1.10.357.10">
    <property type="entry name" value="Tetracycline Repressor, domain 2"/>
    <property type="match status" value="1"/>
</dbReference>
<dbReference type="HAMAP" id="MF_00768">
    <property type="entry name" value="HTH_type_BetI"/>
    <property type="match status" value="1"/>
</dbReference>
<dbReference type="InterPro" id="IPR039538">
    <property type="entry name" value="BetI_C"/>
</dbReference>
<dbReference type="InterPro" id="IPR023772">
    <property type="entry name" value="DNA-bd_HTH_TetR-type_CS"/>
</dbReference>
<dbReference type="InterPro" id="IPR009057">
    <property type="entry name" value="Homeodomain-like_sf"/>
</dbReference>
<dbReference type="InterPro" id="IPR050109">
    <property type="entry name" value="HTH-type_TetR-like_transc_reg"/>
</dbReference>
<dbReference type="InterPro" id="IPR001647">
    <property type="entry name" value="HTH_TetR"/>
</dbReference>
<dbReference type="InterPro" id="IPR036271">
    <property type="entry name" value="Tet_transcr_reg_TetR-rel_C_sf"/>
</dbReference>
<dbReference type="InterPro" id="IPR017757">
    <property type="entry name" value="Tscrpt_rep_BetI"/>
</dbReference>
<dbReference type="NCBIfam" id="TIGR03384">
    <property type="entry name" value="betaine_BetI"/>
    <property type="match status" value="1"/>
</dbReference>
<dbReference type="NCBIfam" id="NF001978">
    <property type="entry name" value="PRK00767.1"/>
    <property type="match status" value="1"/>
</dbReference>
<dbReference type="PANTHER" id="PTHR30055:SF234">
    <property type="entry name" value="HTH-TYPE TRANSCRIPTIONAL REGULATOR BETI"/>
    <property type="match status" value="1"/>
</dbReference>
<dbReference type="PANTHER" id="PTHR30055">
    <property type="entry name" value="HTH-TYPE TRANSCRIPTIONAL REGULATOR RUTR"/>
    <property type="match status" value="1"/>
</dbReference>
<dbReference type="Pfam" id="PF13977">
    <property type="entry name" value="TetR_C_6"/>
    <property type="match status" value="1"/>
</dbReference>
<dbReference type="Pfam" id="PF00440">
    <property type="entry name" value="TetR_N"/>
    <property type="match status" value="1"/>
</dbReference>
<dbReference type="SUPFAM" id="SSF46689">
    <property type="entry name" value="Homeodomain-like"/>
    <property type="match status" value="1"/>
</dbReference>
<dbReference type="SUPFAM" id="SSF48498">
    <property type="entry name" value="Tetracyclin repressor-like, C-terminal domain"/>
    <property type="match status" value="1"/>
</dbReference>
<dbReference type="PROSITE" id="PS01081">
    <property type="entry name" value="HTH_TETR_1"/>
    <property type="match status" value="1"/>
</dbReference>
<dbReference type="PROSITE" id="PS50977">
    <property type="entry name" value="HTH_TETR_2"/>
    <property type="match status" value="1"/>
</dbReference>
<organism>
    <name type="scientific">Pseudomonas fluorescens (strain Pf0-1)</name>
    <dbReference type="NCBI Taxonomy" id="205922"/>
    <lineage>
        <taxon>Bacteria</taxon>
        <taxon>Pseudomonadati</taxon>
        <taxon>Pseudomonadota</taxon>
        <taxon>Gammaproteobacteria</taxon>
        <taxon>Pseudomonadales</taxon>
        <taxon>Pseudomonadaceae</taxon>
        <taxon>Pseudomonas</taxon>
    </lineage>
</organism>
<name>BETI_PSEPF</name>